<dbReference type="EC" id="1.2.1.41" evidence="1"/>
<dbReference type="EMBL" id="CP001091">
    <property type="protein sequence ID" value="ACE62691.1"/>
    <property type="molecule type" value="Genomic_DNA"/>
</dbReference>
<dbReference type="RefSeq" id="WP_005618403.1">
    <property type="nucleotide sequence ID" value="NC_010939.1"/>
</dbReference>
<dbReference type="SMR" id="B3H321"/>
<dbReference type="KEGG" id="apa:APP7_2039"/>
<dbReference type="HOGENOM" id="CLU_030231_0_0_6"/>
<dbReference type="UniPathway" id="UPA00098">
    <property type="reaction ID" value="UER00360"/>
</dbReference>
<dbReference type="Proteomes" id="UP000001226">
    <property type="component" value="Chromosome"/>
</dbReference>
<dbReference type="GO" id="GO:0005737">
    <property type="term" value="C:cytoplasm"/>
    <property type="evidence" value="ECO:0007669"/>
    <property type="project" value="UniProtKB-SubCell"/>
</dbReference>
<dbReference type="GO" id="GO:0004350">
    <property type="term" value="F:glutamate-5-semialdehyde dehydrogenase activity"/>
    <property type="evidence" value="ECO:0007669"/>
    <property type="project" value="UniProtKB-UniRule"/>
</dbReference>
<dbReference type="GO" id="GO:0050661">
    <property type="term" value="F:NADP binding"/>
    <property type="evidence" value="ECO:0007669"/>
    <property type="project" value="InterPro"/>
</dbReference>
<dbReference type="GO" id="GO:0055129">
    <property type="term" value="P:L-proline biosynthetic process"/>
    <property type="evidence" value="ECO:0007669"/>
    <property type="project" value="UniProtKB-UniRule"/>
</dbReference>
<dbReference type="CDD" id="cd07079">
    <property type="entry name" value="ALDH_F18-19_ProA-GPR"/>
    <property type="match status" value="1"/>
</dbReference>
<dbReference type="FunFam" id="3.40.309.10:FF:000006">
    <property type="entry name" value="Gamma-glutamyl phosphate reductase"/>
    <property type="match status" value="1"/>
</dbReference>
<dbReference type="Gene3D" id="3.40.605.10">
    <property type="entry name" value="Aldehyde Dehydrogenase, Chain A, domain 1"/>
    <property type="match status" value="1"/>
</dbReference>
<dbReference type="Gene3D" id="3.40.309.10">
    <property type="entry name" value="Aldehyde Dehydrogenase, Chain A, domain 2"/>
    <property type="match status" value="1"/>
</dbReference>
<dbReference type="HAMAP" id="MF_00412">
    <property type="entry name" value="ProA"/>
    <property type="match status" value="1"/>
</dbReference>
<dbReference type="InterPro" id="IPR016161">
    <property type="entry name" value="Ald_DH/histidinol_DH"/>
</dbReference>
<dbReference type="InterPro" id="IPR016163">
    <property type="entry name" value="Ald_DH_C"/>
</dbReference>
<dbReference type="InterPro" id="IPR016162">
    <property type="entry name" value="Ald_DH_N"/>
</dbReference>
<dbReference type="InterPro" id="IPR015590">
    <property type="entry name" value="Aldehyde_DH_dom"/>
</dbReference>
<dbReference type="InterPro" id="IPR012134">
    <property type="entry name" value="Glu-5-SA_DH"/>
</dbReference>
<dbReference type="InterPro" id="IPR000965">
    <property type="entry name" value="GPR_dom"/>
</dbReference>
<dbReference type="NCBIfam" id="NF001221">
    <property type="entry name" value="PRK00197.1"/>
    <property type="match status" value="1"/>
</dbReference>
<dbReference type="NCBIfam" id="TIGR00407">
    <property type="entry name" value="proA"/>
    <property type="match status" value="1"/>
</dbReference>
<dbReference type="PANTHER" id="PTHR11063:SF8">
    <property type="entry name" value="DELTA-1-PYRROLINE-5-CARBOXYLATE SYNTHASE"/>
    <property type="match status" value="1"/>
</dbReference>
<dbReference type="PANTHER" id="PTHR11063">
    <property type="entry name" value="GLUTAMATE SEMIALDEHYDE DEHYDROGENASE"/>
    <property type="match status" value="1"/>
</dbReference>
<dbReference type="Pfam" id="PF00171">
    <property type="entry name" value="Aldedh"/>
    <property type="match status" value="1"/>
</dbReference>
<dbReference type="PIRSF" id="PIRSF000151">
    <property type="entry name" value="GPR"/>
    <property type="match status" value="1"/>
</dbReference>
<dbReference type="SUPFAM" id="SSF53720">
    <property type="entry name" value="ALDH-like"/>
    <property type="match status" value="1"/>
</dbReference>
<name>PROA_ACTP7</name>
<gene>
    <name evidence="1" type="primary">proA</name>
    <name type="ordered locus">APP7_2039</name>
</gene>
<comment type="function">
    <text evidence="1">Catalyzes the NADPH-dependent reduction of L-glutamate 5-phosphate into L-glutamate 5-semialdehyde and phosphate. The product spontaneously undergoes cyclization to form 1-pyrroline-5-carboxylate.</text>
</comment>
<comment type="catalytic activity">
    <reaction evidence="1">
        <text>L-glutamate 5-semialdehyde + phosphate + NADP(+) = L-glutamyl 5-phosphate + NADPH + H(+)</text>
        <dbReference type="Rhea" id="RHEA:19541"/>
        <dbReference type="ChEBI" id="CHEBI:15378"/>
        <dbReference type="ChEBI" id="CHEBI:43474"/>
        <dbReference type="ChEBI" id="CHEBI:57783"/>
        <dbReference type="ChEBI" id="CHEBI:58066"/>
        <dbReference type="ChEBI" id="CHEBI:58274"/>
        <dbReference type="ChEBI" id="CHEBI:58349"/>
        <dbReference type="EC" id="1.2.1.41"/>
    </reaction>
</comment>
<comment type="pathway">
    <text evidence="1">Amino-acid biosynthesis; L-proline biosynthesis; L-glutamate 5-semialdehyde from L-glutamate: step 2/2.</text>
</comment>
<comment type="subcellular location">
    <subcellularLocation>
        <location evidence="1">Cytoplasm</location>
    </subcellularLocation>
</comment>
<comment type="similarity">
    <text evidence="1">Belongs to the gamma-glutamyl phosphate reductase family.</text>
</comment>
<proteinExistence type="inferred from homology"/>
<accession>B3H321</accession>
<organism>
    <name type="scientific">Actinobacillus pleuropneumoniae serotype 7 (strain AP76)</name>
    <dbReference type="NCBI Taxonomy" id="537457"/>
    <lineage>
        <taxon>Bacteria</taxon>
        <taxon>Pseudomonadati</taxon>
        <taxon>Pseudomonadota</taxon>
        <taxon>Gammaproteobacteria</taxon>
        <taxon>Pasteurellales</taxon>
        <taxon>Pasteurellaceae</taxon>
        <taxon>Actinobacillus</taxon>
    </lineage>
</organism>
<reference key="1">
    <citation type="submission" date="2008-06" db="EMBL/GenBank/DDBJ databases">
        <title>Genome and proteome analysis of A. pleuropneumoniae serotype 7.</title>
        <authorList>
            <person name="Linke B."/>
            <person name="Buettner F."/>
            <person name="Martinez-Arias R."/>
            <person name="Goesmann A."/>
            <person name="Baltes N."/>
            <person name="Tegetmeyer H."/>
            <person name="Singh M."/>
            <person name="Gerlach G.F."/>
        </authorList>
    </citation>
    <scope>NUCLEOTIDE SEQUENCE [LARGE SCALE GENOMIC DNA]</scope>
    <source>
        <strain>AP76</strain>
    </source>
</reference>
<feature type="chain" id="PRO_1000123771" description="Gamma-glutamyl phosphate reductase">
    <location>
        <begin position="1"/>
        <end position="412"/>
    </location>
</feature>
<keyword id="KW-0028">Amino-acid biosynthesis</keyword>
<keyword id="KW-0963">Cytoplasm</keyword>
<keyword id="KW-0521">NADP</keyword>
<keyword id="KW-0560">Oxidoreductase</keyword>
<keyword id="KW-0641">Proline biosynthesis</keyword>
<sequence>MQMITLAQQAKIASVELAQFGNVQKNQALLTIAQQLEQRSAEILAANAKDIEFAKNQGISTAIIDRLLLNESRLQGIANDVRNVAKLADPVGQVIDGGVLNSGLKIERQRVPLGVILTIYEARPNVTIDVASLCLKTGNAVILRGGKETKFTNAVLVEVVQQALETAGLPKLAVQAVTDPDRVLLLELLKLDRYIDMVIPRGGAGLHQFCKENSTIPVIVGGIGVCHMFVEKSADQQKALELIANAKTQRPSTCNTLETLLVEKAIAGEFLPKLANRMKALDVTLHTDDLQKTEGIEPLDDARMRQEWLSLDLNVVVIDNLTKAVEHIREYGSQHSEAILTSDYQLARQFVAQVDAAAVYINASTRFTDGGEFGLGAEVAVSTQKLHARGPMGLEALTTYKWVCEGDYLVRK</sequence>
<evidence type="ECO:0000255" key="1">
    <source>
        <dbReference type="HAMAP-Rule" id="MF_00412"/>
    </source>
</evidence>
<protein>
    <recommendedName>
        <fullName evidence="1">Gamma-glutamyl phosphate reductase</fullName>
        <shortName evidence="1">GPR</shortName>
        <ecNumber evidence="1">1.2.1.41</ecNumber>
    </recommendedName>
    <alternativeName>
        <fullName evidence="1">Glutamate-5-semialdehyde dehydrogenase</fullName>
    </alternativeName>
    <alternativeName>
        <fullName evidence="1">Glutamyl-gamma-semialdehyde dehydrogenase</fullName>
        <shortName evidence="1">GSA dehydrogenase</shortName>
    </alternativeName>
</protein>